<proteinExistence type="inferred from homology"/>
<dbReference type="EMBL" id="AE017223">
    <property type="protein sequence ID" value="AAX74545.1"/>
    <property type="molecule type" value="Genomic_DNA"/>
</dbReference>
<dbReference type="RefSeq" id="WP_002964332.1">
    <property type="nucleotide sequence ID" value="NC_006932.1"/>
</dbReference>
<dbReference type="SMR" id="P0DN85"/>
<dbReference type="EnsemblBacteria" id="AAX74545">
    <property type="protein sequence ID" value="AAX74545"/>
    <property type="gene ID" value="BruAb1_1207"/>
</dbReference>
<dbReference type="GeneID" id="97533554"/>
<dbReference type="KEGG" id="bmb:BruAb1_1207"/>
<dbReference type="HOGENOM" id="CLU_040469_3_2_5"/>
<dbReference type="PRO" id="PR:P0DN85"/>
<dbReference type="Proteomes" id="UP000000540">
    <property type="component" value="Chromosome I"/>
</dbReference>
<dbReference type="GO" id="GO:0005829">
    <property type="term" value="C:cytosol"/>
    <property type="evidence" value="ECO:0007669"/>
    <property type="project" value="TreeGrafter"/>
</dbReference>
<dbReference type="GO" id="GO:0005524">
    <property type="term" value="F:ATP binding"/>
    <property type="evidence" value="ECO:0007669"/>
    <property type="project" value="UniProtKB-UniRule"/>
</dbReference>
<dbReference type="GO" id="GO:0016887">
    <property type="term" value="F:ATP hydrolysis activity"/>
    <property type="evidence" value="ECO:0007669"/>
    <property type="project" value="InterPro"/>
</dbReference>
<dbReference type="GO" id="GO:0140664">
    <property type="term" value="F:ATP-dependent DNA damage sensor activity"/>
    <property type="evidence" value="ECO:0007669"/>
    <property type="project" value="InterPro"/>
</dbReference>
<dbReference type="GO" id="GO:0003684">
    <property type="term" value="F:damaged DNA binding"/>
    <property type="evidence" value="ECO:0007669"/>
    <property type="project" value="UniProtKB-UniRule"/>
</dbReference>
<dbReference type="GO" id="GO:0003697">
    <property type="term" value="F:single-stranded DNA binding"/>
    <property type="evidence" value="ECO:0007669"/>
    <property type="project" value="UniProtKB-UniRule"/>
</dbReference>
<dbReference type="GO" id="GO:0006310">
    <property type="term" value="P:DNA recombination"/>
    <property type="evidence" value="ECO:0007669"/>
    <property type="project" value="UniProtKB-UniRule"/>
</dbReference>
<dbReference type="GO" id="GO:0006281">
    <property type="term" value="P:DNA repair"/>
    <property type="evidence" value="ECO:0007669"/>
    <property type="project" value="UniProtKB-UniRule"/>
</dbReference>
<dbReference type="GO" id="GO:0009432">
    <property type="term" value="P:SOS response"/>
    <property type="evidence" value="ECO:0007669"/>
    <property type="project" value="UniProtKB-UniRule"/>
</dbReference>
<dbReference type="CDD" id="cd00983">
    <property type="entry name" value="RecA"/>
    <property type="match status" value="1"/>
</dbReference>
<dbReference type="FunFam" id="3.40.50.300:FF:000087">
    <property type="entry name" value="Recombinase RecA"/>
    <property type="match status" value="1"/>
</dbReference>
<dbReference type="Gene3D" id="3.40.50.300">
    <property type="entry name" value="P-loop containing nucleotide triphosphate hydrolases"/>
    <property type="match status" value="1"/>
</dbReference>
<dbReference type="HAMAP" id="MF_00268">
    <property type="entry name" value="RecA"/>
    <property type="match status" value="1"/>
</dbReference>
<dbReference type="InterPro" id="IPR003593">
    <property type="entry name" value="AAA+_ATPase"/>
</dbReference>
<dbReference type="InterPro" id="IPR013765">
    <property type="entry name" value="DNA_recomb/repair_RecA"/>
</dbReference>
<dbReference type="InterPro" id="IPR020584">
    <property type="entry name" value="DNA_recomb/repair_RecA_CS"/>
</dbReference>
<dbReference type="InterPro" id="IPR027417">
    <property type="entry name" value="P-loop_NTPase"/>
</dbReference>
<dbReference type="InterPro" id="IPR049261">
    <property type="entry name" value="RecA-like_C"/>
</dbReference>
<dbReference type="InterPro" id="IPR049428">
    <property type="entry name" value="RecA-like_N"/>
</dbReference>
<dbReference type="InterPro" id="IPR020588">
    <property type="entry name" value="RecA_ATP-bd"/>
</dbReference>
<dbReference type="InterPro" id="IPR023400">
    <property type="entry name" value="RecA_C_sf"/>
</dbReference>
<dbReference type="InterPro" id="IPR020587">
    <property type="entry name" value="RecA_monomer-monomer_interface"/>
</dbReference>
<dbReference type="NCBIfam" id="TIGR02012">
    <property type="entry name" value="tigrfam_recA"/>
    <property type="match status" value="1"/>
</dbReference>
<dbReference type="PANTHER" id="PTHR45900:SF1">
    <property type="entry name" value="MITOCHONDRIAL DNA REPAIR PROTEIN RECA HOMOLOG-RELATED"/>
    <property type="match status" value="1"/>
</dbReference>
<dbReference type="PANTHER" id="PTHR45900">
    <property type="entry name" value="RECA"/>
    <property type="match status" value="1"/>
</dbReference>
<dbReference type="Pfam" id="PF00154">
    <property type="entry name" value="RecA"/>
    <property type="match status" value="1"/>
</dbReference>
<dbReference type="Pfam" id="PF21096">
    <property type="entry name" value="RecA_C"/>
    <property type="match status" value="1"/>
</dbReference>
<dbReference type="PRINTS" id="PR00142">
    <property type="entry name" value="RECA"/>
</dbReference>
<dbReference type="SMART" id="SM00382">
    <property type="entry name" value="AAA"/>
    <property type="match status" value="1"/>
</dbReference>
<dbReference type="SUPFAM" id="SSF52540">
    <property type="entry name" value="P-loop containing nucleoside triphosphate hydrolases"/>
    <property type="match status" value="1"/>
</dbReference>
<dbReference type="SUPFAM" id="SSF54752">
    <property type="entry name" value="RecA protein, C-terminal domain"/>
    <property type="match status" value="1"/>
</dbReference>
<dbReference type="PROSITE" id="PS00321">
    <property type="entry name" value="RECA_1"/>
    <property type="match status" value="1"/>
</dbReference>
<dbReference type="PROSITE" id="PS50162">
    <property type="entry name" value="RECA_2"/>
    <property type="match status" value="1"/>
</dbReference>
<dbReference type="PROSITE" id="PS50163">
    <property type="entry name" value="RECA_3"/>
    <property type="match status" value="1"/>
</dbReference>
<comment type="function">
    <text evidence="1">Can catalyze the hydrolysis of ATP in the presence of single-stranded DNA, the ATP-dependent uptake of single-stranded DNA by duplex DNA, and the ATP-dependent hybridization of homologous single-stranded DNAs. It interacts with LexA causing its activation and leading to its autocatalytic cleavage.</text>
</comment>
<comment type="subcellular location">
    <subcellularLocation>
        <location evidence="1">Cytoplasm</location>
    </subcellularLocation>
</comment>
<comment type="similarity">
    <text evidence="1">Belongs to the RecA family.</text>
</comment>
<accession>P0DN85</accession>
<accession>Q04761</accession>
<accession>Q57CT9</accession>
<evidence type="ECO:0000255" key="1">
    <source>
        <dbReference type="HAMAP-Rule" id="MF_00268"/>
    </source>
</evidence>
<reference key="1">
    <citation type="journal article" date="2005" name="J. Bacteriol.">
        <title>Completion of the genome sequence of Brucella abortus and comparison to the highly similar genomes of Brucella melitensis and Brucella suis.</title>
        <authorList>
            <person name="Halling S.M."/>
            <person name="Peterson-Burch B.D."/>
            <person name="Bricker B.J."/>
            <person name="Zuerner R.L."/>
            <person name="Qing Z."/>
            <person name="Li L.-L."/>
            <person name="Kapur V."/>
            <person name="Alt D.P."/>
            <person name="Olsen S.C."/>
        </authorList>
    </citation>
    <scope>NUCLEOTIDE SEQUENCE [LARGE SCALE GENOMIC DNA]</scope>
    <source>
        <strain>9-941</strain>
    </source>
</reference>
<organism>
    <name type="scientific">Brucella abortus biovar 1 (strain 9-941)</name>
    <dbReference type="NCBI Taxonomy" id="262698"/>
    <lineage>
        <taxon>Bacteria</taxon>
        <taxon>Pseudomonadati</taxon>
        <taxon>Pseudomonadota</taxon>
        <taxon>Alphaproteobacteria</taxon>
        <taxon>Hyphomicrobiales</taxon>
        <taxon>Brucellaceae</taxon>
        <taxon>Brucella/Ochrobactrum group</taxon>
        <taxon>Brucella</taxon>
    </lineage>
</organism>
<protein>
    <recommendedName>
        <fullName evidence="1">Protein RecA</fullName>
    </recommendedName>
    <alternativeName>
        <fullName evidence="1">Recombinase A</fullName>
    </alternativeName>
</protein>
<keyword id="KW-0067">ATP-binding</keyword>
<keyword id="KW-0963">Cytoplasm</keyword>
<keyword id="KW-0227">DNA damage</keyword>
<keyword id="KW-0233">DNA recombination</keyword>
<keyword id="KW-0234">DNA repair</keyword>
<keyword id="KW-0238">DNA-binding</keyword>
<keyword id="KW-0547">Nucleotide-binding</keyword>
<keyword id="KW-0742">SOS response</keyword>
<feature type="chain" id="PRO_0000122670" description="Protein RecA">
    <location>
        <begin position="1"/>
        <end position="361"/>
    </location>
</feature>
<feature type="binding site" evidence="1">
    <location>
        <begin position="77"/>
        <end position="84"/>
    </location>
    <ligand>
        <name>ATP</name>
        <dbReference type="ChEBI" id="CHEBI:30616"/>
    </ligand>
</feature>
<gene>
    <name evidence="1" type="primary">recA</name>
    <name type="ordered locus">BruAb1_1207</name>
</gene>
<name>RECA_BRUAB</name>
<sequence length="361" mass="38735">MSQNSLRLVEDNSVDKTKALDAALSQIERAFGKGSIMRLGQNDQVVEIETVSTGSLSLDIALGVGGLPKGRIVEIYGPESSGKTTLALHTIAEAQKKGGICAFVDAEHALDPVYARKLGVDLENLLISQPDTGEQALEITDTLVRSGAIDVLVVDSVAALTPRAEIEGEMGDSLPGLQARLMSQALRKLTGSISRSNCMVIFINQIRMKIGVMFGSPETTTGGNALKFYASVRLDIRRIGSIKERDEVVGNQTRVKVVKNKLAPPFKQVEFDIMYGAGVSKVGELVDLGVKAGVVEKSGAWFSYNSQRLGQGRENAKQYLKDNPEVAREIETTLRQNAGLIAEQFLDDGGPEEDAAGAAEM</sequence>